<reference key="1">
    <citation type="journal article" date="2005" name="Nucleic Acids Res.">
        <title>Genomic blueprint of Hahella chejuensis, a marine microbe producing an algicidal agent.</title>
        <authorList>
            <person name="Jeong H."/>
            <person name="Yim J.H."/>
            <person name="Lee C."/>
            <person name="Choi S.-H."/>
            <person name="Park Y.K."/>
            <person name="Yoon S.H."/>
            <person name="Hur C.-G."/>
            <person name="Kang H.-Y."/>
            <person name="Kim D."/>
            <person name="Lee H.H."/>
            <person name="Park K.H."/>
            <person name="Park S.-H."/>
            <person name="Park H.-S."/>
            <person name="Lee H.K."/>
            <person name="Oh T.K."/>
            <person name="Kim J.F."/>
        </authorList>
    </citation>
    <scope>NUCLEOTIDE SEQUENCE [LARGE SCALE GENOMIC DNA]</scope>
    <source>
        <strain>KCTC 2396</strain>
    </source>
</reference>
<keyword id="KW-0963">Cytoplasm</keyword>
<keyword id="KW-0460">Magnesium</keyword>
<keyword id="KW-0479">Metal-binding</keyword>
<keyword id="KW-0548">Nucleotidyltransferase</keyword>
<keyword id="KW-1185">Reference proteome</keyword>
<keyword id="KW-0694">RNA-binding</keyword>
<keyword id="KW-0808">Transferase</keyword>
<proteinExistence type="inferred from homology"/>
<organism>
    <name type="scientific">Hahella chejuensis (strain KCTC 2396)</name>
    <dbReference type="NCBI Taxonomy" id="349521"/>
    <lineage>
        <taxon>Bacteria</taxon>
        <taxon>Pseudomonadati</taxon>
        <taxon>Pseudomonadota</taxon>
        <taxon>Gammaproteobacteria</taxon>
        <taxon>Oceanospirillales</taxon>
        <taxon>Hahellaceae</taxon>
        <taxon>Hahella</taxon>
    </lineage>
</organism>
<dbReference type="EC" id="2.7.7.8" evidence="1"/>
<dbReference type="EMBL" id="CP000155">
    <property type="protein sequence ID" value="ABC28115.1"/>
    <property type="molecule type" value="Genomic_DNA"/>
</dbReference>
<dbReference type="RefSeq" id="WP_011395188.1">
    <property type="nucleotide sequence ID" value="NC_007645.1"/>
</dbReference>
<dbReference type="SMR" id="Q2SMK9"/>
<dbReference type="STRING" id="349521.HCH_01244"/>
<dbReference type="KEGG" id="hch:HCH_01244"/>
<dbReference type="eggNOG" id="COG1185">
    <property type="taxonomic scope" value="Bacteria"/>
</dbReference>
<dbReference type="HOGENOM" id="CLU_004217_2_2_6"/>
<dbReference type="OrthoDB" id="9804305at2"/>
<dbReference type="Proteomes" id="UP000000238">
    <property type="component" value="Chromosome"/>
</dbReference>
<dbReference type="GO" id="GO:0005829">
    <property type="term" value="C:cytosol"/>
    <property type="evidence" value="ECO:0007669"/>
    <property type="project" value="TreeGrafter"/>
</dbReference>
<dbReference type="GO" id="GO:0000175">
    <property type="term" value="F:3'-5'-RNA exonuclease activity"/>
    <property type="evidence" value="ECO:0007669"/>
    <property type="project" value="TreeGrafter"/>
</dbReference>
<dbReference type="GO" id="GO:0000287">
    <property type="term" value="F:magnesium ion binding"/>
    <property type="evidence" value="ECO:0007669"/>
    <property type="project" value="UniProtKB-UniRule"/>
</dbReference>
<dbReference type="GO" id="GO:0004654">
    <property type="term" value="F:polyribonucleotide nucleotidyltransferase activity"/>
    <property type="evidence" value="ECO:0007669"/>
    <property type="project" value="UniProtKB-UniRule"/>
</dbReference>
<dbReference type="GO" id="GO:0003723">
    <property type="term" value="F:RNA binding"/>
    <property type="evidence" value="ECO:0007669"/>
    <property type="project" value="UniProtKB-UniRule"/>
</dbReference>
<dbReference type="GO" id="GO:0006402">
    <property type="term" value="P:mRNA catabolic process"/>
    <property type="evidence" value="ECO:0007669"/>
    <property type="project" value="UniProtKB-UniRule"/>
</dbReference>
<dbReference type="GO" id="GO:0006396">
    <property type="term" value="P:RNA processing"/>
    <property type="evidence" value="ECO:0007669"/>
    <property type="project" value="InterPro"/>
</dbReference>
<dbReference type="CDD" id="cd02393">
    <property type="entry name" value="KH-I_PNPase"/>
    <property type="match status" value="1"/>
</dbReference>
<dbReference type="CDD" id="cd11363">
    <property type="entry name" value="RNase_PH_PNPase_1"/>
    <property type="match status" value="1"/>
</dbReference>
<dbReference type="CDD" id="cd11364">
    <property type="entry name" value="RNase_PH_PNPase_2"/>
    <property type="match status" value="1"/>
</dbReference>
<dbReference type="CDD" id="cd04472">
    <property type="entry name" value="S1_PNPase"/>
    <property type="match status" value="1"/>
</dbReference>
<dbReference type="FunFam" id="2.40.50.140:FF:000023">
    <property type="entry name" value="Polyribonucleotide nucleotidyltransferase"/>
    <property type="match status" value="1"/>
</dbReference>
<dbReference type="FunFam" id="3.30.1370.10:FF:000001">
    <property type="entry name" value="Polyribonucleotide nucleotidyltransferase"/>
    <property type="match status" value="1"/>
</dbReference>
<dbReference type="FunFam" id="3.30.230.70:FF:000001">
    <property type="entry name" value="Polyribonucleotide nucleotidyltransferase"/>
    <property type="match status" value="1"/>
</dbReference>
<dbReference type="FunFam" id="3.30.230.70:FF:000002">
    <property type="entry name" value="Polyribonucleotide nucleotidyltransferase"/>
    <property type="match status" value="1"/>
</dbReference>
<dbReference type="Gene3D" id="3.30.230.70">
    <property type="entry name" value="GHMP Kinase, N-terminal domain"/>
    <property type="match status" value="2"/>
</dbReference>
<dbReference type="Gene3D" id="3.30.1370.10">
    <property type="entry name" value="K Homology domain, type 1"/>
    <property type="match status" value="1"/>
</dbReference>
<dbReference type="Gene3D" id="2.40.50.140">
    <property type="entry name" value="Nucleic acid-binding proteins"/>
    <property type="match status" value="1"/>
</dbReference>
<dbReference type="HAMAP" id="MF_01595">
    <property type="entry name" value="PNPase"/>
    <property type="match status" value="1"/>
</dbReference>
<dbReference type="InterPro" id="IPR001247">
    <property type="entry name" value="ExoRNase_PH_dom1"/>
</dbReference>
<dbReference type="InterPro" id="IPR015847">
    <property type="entry name" value="ExoRNase_PH_dom2"/>
</dbReference>
<dbReference type="InterPro" id="IPR036345">
    <property type="entry name" value="ExoRNase_PH_dom2_sf"/>
</dbReference>
<dbReference type="InterPro" id="IPR004087">
    <property type="entry name" value="KH_dom"/>
</dbReference>
<dbReference type="InterPro" id="IPR004088">
    <property type="entry name" value="KH_dom_type_1"/>
</dbReference>
<dbReference type="InterPro" id="IPR036612">
    <property type="entry name" value="KH_dom_type_1_sf"/>
</dbReference>
<dbReference type="InterPro" id="IPR012340">
    <property type="entry name" value="NA-bd_OB-fold"/>
</dbReference>
<dbReference type="InterPro" id="IPR012162">
    <property type="entry name" value="PNPase"/>
</dbReference>
<dbReference type="InterPro" id="IPR027408">
    <property type="entry name" value="PNPase/RNase_PH_dom_sf"/>
</dbReference>
<dbReference type="InterPro" id="IPR015848">
    <property type="entry name" value="PNPase_PH_RNA-bd_bac/org-type"/>
</dbReference>
<dbReference type="InterPro" id="IPR020568">
    <property type="entry name" value="Ribosomal_Su5_D2-typ_SF"/>
</dbReference>
<dbReference type="InterPro" id="IPR003029">
    <property type="entry name" value="S1_domain"/>
</dbReference>
<dbReference type="NCBIfam" id="TIGR03591">
    <property type="entry name" value="polynuc_phos"/>
    <property type="match status" value="1"/>
</dbReference>
<dbReference type="NCBIfam" id="NF008805">
    <property type="entry name" value="PRK11824.1"/>
    <property type="match status" value="1"/>
</dbReference>
<dbReference type="PANTHER" id="PTHR11252">
    <property type="entry name" value="POLYRIBONUCLEOTIDE NUCLEOTIDYLTRANSFERASE"/>
    <property type="match status" value="1"/>
</dbReference>
<dbReference type="PANTHER" id="PTHR11252:SF0">
    <property type="entry name" value="POLYRIBONUCLEOTIDE NUCLEOTIDYLTRANSFERASE 1, MITOCHONDRIAL"/>
    <property type="match status" value="1"/>
</dbReference>
<dbReference type="Pfam" id="PF00013">
    <property type="entry name" value="KH_1"/>
    <property type="match status" value="1"/>
</dbReference>
<dbReference type="Pfam" id="PF03726">
    <property type="entry name" value="PNPase"/>
    <property type="match status" value="1"/>
</dbReference>
<dbReference type="Pfam" id="PF01138">
    <property type="entry name" value="RNase_PH"/>
    <property type="match status" value="2"/>
</dbReference>
<dbReference type="Pfam" id="PF03725">
    <property type="entry name" value="RNase_PH_C"/>
    <property type="match status" value="2"/>
</dbReference>
<dbReference type="Pfam" id="PF00575">
    <property type="entry name" value="S1"/>
    <property type="match status" value="1"/>
</dbReference>
<dbReference type="PIRSF" id="PIRSF005499">
    <property type="entry name" value="PNPase"/>
    <property type="match status" value="1"/>
</dbReference>
<dbReference type="SMART" id="SM00322">
    <property type="entry name" value="KH"/>
    <property type="match status" value="1"/>
</dbReference>
<dbReference type="SMART" id="SM00316">
    <property type="entry name" value="S1"/>
    <property type="match status" value="1"/>
</dbReference>
<dbReference type="SUPFAM" id="SSF54791">
    <property type="entry name" value="Eukaryotic type KH-domain (KH-domain type I)"/>
    <property type="match status" value="1"/>
</dbReference>
<dbReference type="SUPFAM" id="SSF50249">
    <property type="entry name" value="Nucleic acid-binding proteins"/>
    <property type="match status" value="1"/>
</dbReference>
<dbReference type="SUPFAM" id="SSF55666">
    <property type="entry name" value="Ribonuclease PH domain 2-like"/>
    <property type="match status" value="2"/>
</dbReference>
<dbReference type="SUPFAM" id="SSF54211">
    <property type="entry name" value="Ribosomal protein S5 domain 2-like"/>
    <property type="match status" value="2"/>
</dbReference>
<dbReference type="PROSITE" id="PS50084">
    <property type="entry name" value="KH_TYPE_1"/>
    <property type="match status" value="1"/>
</dbReference>
<dbReference type="PROSITE" id="PS50126">
    <property type="entry name" value="S1"/>
    <property type="match status" value="1"/>
</dbReference>
<name>PNP_HAHCH</name>
<sequence length="703" mass="76450">MNPVRKTFQYGNSTVTLETGRIARQATGAVLVTMDDTVVLVTAVAEKEAVPGRDFFPLSVHYQEKTYAAGRIPGGYFKREGRPSEKETLTSRLIDRPIRPLFPDGFMNEVQIICTVMSANKDVDPDIASIIGAAAALEISGVPFQGPLAAARVGYTDEDGYLLNPGFKAIENSKLDMVVAGTEDAVLMVESEAKELTEDQMLGAVLFAHQEMQVAVQAIKEFAQEAGKPKWDWQAPEVNAELLEALKAKFAGSIGEAYGIRVKADRYAKLGELRQQAEEELAGEEEGKFEAELVKKYFSKLEKACVRQNIIKGEPRIDGRDTKTVRDLKIEVGVLPNTHGSALFTRGETQALVTATLGTMRDVLMVDALEGEKKDSFMFHYNFPPYSVGEASRVGGVGRREIGHGRLARRGVQALMPNLEEFPYAVRCVSEITESNGSSSMASVCGSSLALMDAGIPVKAPVAGIAMGLVKEGDSFAVLTDILGDEDHLGDMDFKVAGTEKGVTALQMDIKINGITDEIMEIALEQALHARLHILGEMNKVISEPRDSVADNAPKMETIKIDPDKIRDVIGKGGATIRSICEDTGASIDIDDNGTVRIYAESKLAADEAIYRITEITAEAEVGKLYRGKVERIVEFGAFVNILPGKDGLVHISQIAQERVENVTDYLKEGQEVVVKVLDIDARGRIKLSMKEVTEDEKASMAG</sequence>
<accession>Q2SMK9</accession>
<protein>
    <recommendedName>
        <fullName evidence="1">Polyribonucleotide nucleotidyltransferase</fullName>
        <ecNumber evidence="1">2.7.7.8</ecNumber>
    </recommendedName>
    <alternativeName>
        <fullName evidence="1">Polynucleotide phosphorylase</fullName>
        <shortName evidence="1">PNPase</shortName>
    </alternativeName>
</protein>
<comment type="function">
    <text evidence="1">Involved in mRNA degradation. Catalyzes the phosphorolysis of single-stranded polyribonucleotides processively in the 3'- to 5'-direction.</text>
</comment>
<comment type="catalytic activity">
    <reaction evidence="1">
        <text>RNA(n+1) + phosphate = RNA(n) + a ribonucleoside 5'-diphosphate</text>
        <dbReference type="Rhea" id="RHEA:22096"/>
        <dbReference type="Rhea" id="RHEA-COMP:14527"/>
        <dbReference type="Rhea" id="RHEA-COMP:17342"/>
        <dbReference type="ChEBI" id="CHEBI:43474"/>
        <dbReference type="ChEBI" id="CHEBI:57930"/>
        <dbReference type="ChEBI" id="CHEBI:140395"/>
        <dbReference type="EC" id="2.7.7.8"/>
    </reaction>
</comment>
<comment type="cofactor">
    <cofactor evidence="1">
        <name>Mg(2+)</name>
        <dbReference type="ChEBI" id="CHEBI:18420"/>
    </cofactor>
</comment>
<comment type="subunit">
    <text evidence="1">Component of the RNA degradosome, which is a multiprotein complex involved in RNA processing and mRNA degradation.</text>
</comment>
<comment type="subcellular location">
    <subcellularLocation>
        <location evidence="1">Cytoplasm</location>
    </subcellularLocation>
</comment>
<comment type="similarity">
    <text evidence="1">Belongs to the polyribonucleotide nucleotidyltransferase family.</text>
</comment>
<evidence type="ECO:0000255" key="1">
    <source>
        <dbReference type="HAMAP-Rule" id="MF_01595"/>
    </source>
</evidence>
<feature type="chain" id="PRO_0000329674" description="Polyribonucleotide nucleotidyltransferase">
    <location>
        <begin position="1"/>
        <end position="703"/>
    </location>
</feature>
<feature type="domain" description="KH" evidence="1">
    <location>
        <begin position="554"/>
        <end position="613"/>
    </location>
</feature>
<feature type="domain" description="S1 motif" evidence="1">
    <location>
        <begin position="623"/>
        <end position="691"/>
    </location>
</feature>
<feature type="binding site" evidence="1">
    <location>
        <position position="487"/>
    </location>
    <ligand>
        <name>Mg(2+)</name>
        <dbReference type="ChEBI" id="CHEBI:18420"/>
    </ligand>
</feature>
<feature type="binding site" evidence="1">
    <location>
        <position position="493"/>
    </location>
    <ligand>
        <name>Mg(2+)</name>
        <dbReference type="ChEBI" id="CHEBI:18420"/>
    </ligand>
</feature>
<gene>
    <name evidence="1" type="primary">pnp</name>
    <name type="ordered locus">HCH_01244</name>
</gene>